<name>HXD3A_TAKRU</name>
<organism>
    <name type="scientific">Takifugu rubripes</name>
    <name type="common">Japanese pufferfish</name>
    <name type="synonym">Fugu rubripes</name>
    <dbReference type="NCBI Taxonomy" id="31033"/>
    <lineage>
        <taxon>Eukaryota</taxon>
        <taxon>Metazoa</taxon>
        <taxon>Chordata</taxon>
        <taxon>Craniata</taxon>
        <taxon>Vertebrata</taxon>
        <taxon>Euteleostomi</taxon>
        <taxon>Actinopterygii</taxon>
        <taxon>Neopterygii</taxon>
        <taxon>Teleostei</taxon>
        <taxon>Neoteleostei</taxon>
        <taxon>Acanthomorphata</taxon>
        <taxon>Eupercaria</taxon>
        <taxon>Tetraodontiformes</taxon>
        <taxon>Tetradontoidea</taxon>
        <taxon>Tetraodontidae</taxon>
        <taxon>Takifugu</taxon>
    </lineage>
</organism>
<proteinExistence type="inferred from homology"/>
<evidence type="ECO:0000250" key="1"/>
<evidence type="ECO:0000255" key="2">
    <source>
        <dbReference type="PROSITE-ProRule" id="PRU00108"/>
    </source>
</evidence>
<evidence type="ECO:0000256" key="3">
    <source>
        <dbReference type="SAM" id="MobiDB-lite"/>
    </source>
</evidence>
<evidence type="ECO:0000305" key="4"/>
<accession>Q1KKS7</accession>
<reference key="1">
    <citation type="journal article" date="2006" name="Proc. Natl. Acad. Sci. U.S.A.">
        <title>Highly conserved syntenic blocks at the vertebrate Hox loci and conserved regulatory elements within and outside Hox gene clusters.</title>
        <authorList>
            <person name="Lee A.P."/>
            <person name="Koh E.G.L."/>
            <person name="Tay A."/>
            <person name="Brenner S."/>
            <person name="Venkatesh B."/>
        </authorList>
    </citation>
    <scope>NUCLEOTIDE SEQUENCE [GENOMIC DNA]</scope>
</reference>
<comment type="function">
    <text evidence="1">Sequence-specific transcription factor which is part of a developmental regulatory system that provides cells with specific positional identities on the anterior-posterior axis.</text>
</comment>
<comment type="subcellular location">
    <subcellularLocation>
        <location evidence="2">Nucleus</location>
    </subcellularLocation>
</comment>
<comment type="similarity">
    <text evidence="4">Belongs to the Antp homeobox family.</text>
</comment>
<keyword id="KW-0217">Developmental protein</keyword>
<keyword id="KW-0238">DNA-binding</keyword>
<keyword id="KW-0371">Homeobox</keyword>
<keyword id="KW-0539">Nucleus</keyword>
<keyword id="KW-1185">Reference proteome</keyword>
<keyword id="KW-0804">Transcription</keyword>
<keyword id="KW-0805">Transcription regulation</keyword>
<sequence>MQKATYYDNSGLFGGYTYPKPDSYNYAPQSYTTANLESDFQGSVCPIQTPTVRPPALKDADLNGDCMRQSSNQSNGNQDTNIGEQPGPPLSASSPSPNSSSSQKKKSPSSSANNSATPAITKQIFPWMKETRQNAKQKGNNCASAGRDNGEGQWRGQPGPCGEVSDEKSPPGPSSKRVRTAYTSAQLVELEKEFHFNRYLCRPRRVEMANLLNLTERQIKIWFQNRRMKYKKDQKSKGLAHSPLGHSPDRSPPLSGPNHIGYSGQLQNGLGYDAPSPPSFAKPQQNMYGLAAYTAPLGGCIPQQKRYLGSEYEHHGMQSNGSFASASLQDSPVYVGGNFVDSMPASGPMFNLGHLPHPSSTSVDYSCAAQIPGNHHHGPCDPHPTYTDLTSHQASQGRIQEAPKLTHL</sequence>
<dbReference type="EMBL" id="DQ481668">
    <property type="protein sequence ID" value="ABF22467.1"/>
    <property type="molecule type" value="Genomic_DNA"/>
</dbReference>
<dbReference type="SMR" id="Q1KKS7"/>
<dbReference type="FunCoup" id="Q1KKS7">
    <property type="interactions" value="132"/>
</dbReference>
<dbReference type="STRING" id="31033.ENSTRUP00000044913"/>
<dbReference type="eggNOG" id="KOG0489">
    <property type="taxonomic scope" value="Eukaryota"/>
</dbReference>
<dbReference type="HOGENOM" id="CLU_051508_1_0_1"/>
<dbReference type="InParanoid" id="Q1KKS7"/>
<dbReference type="Proteomes" id="UP000005226">
    <property type="component" value="Unplaced"/>
</dbReference>
<dbReference type="GO" id="GO:0005634">
    <property type="term" value="C:nucleus"/>
    <property type="evidence" value="ECO:0007669"/>
    <property type="project" value="UniProtKB-SubCell"/>
</dbReference>
<dbReference type="GO" id="GO:0000981">
    <property type="term" value="F:DNA-binding transcription factor activity, RNA polymerase II-specific"/>
    <property type="evidence" value="ECO:0007669"/>
    <property type="project" value="InterPro"/>
</dbReference>
<dbReference type="GO" id="GO:0000978">
    <property type="term" value="F:RNA polymerase II cis-regulatory region sequence-specific DNA binding"/>
    <property type="evidence" value="ECO:0007669"/>
    <property type="project" value="TreeGrafter"/>
</dbReference>
<dbReference type="GO" id="GO:0009952">
    <property type="term" value="P:anterior/posterior pattern specification"/>
    <property type="evidence" value="ECO:0007669"/>
    <property type="project" value="TreeGrafter"/>
</dbReference>
<dbReference type="GO" id="GO:0048704">
    <property type="term" value="P:embryonic skeletal system morphogenesis"/>
    <property type="evidence" value="ECO:0007669"/>
    <property type="project" value="TreeGrafter"/>
</dbReference>
<dbReference type="CDD" id="cd00086">
    <property type="entry name" value="homeodomain"/>
    <property type="match status" value="1"/>
</dbReference>
<dbReference type="FunFam" id="1.10.10.60:FF:000094">
    <property type="entry name" value="Homeobox protein Hox-A3"/>
    <property type="match status" value="1"/>
</dbReference>
<dbReference type="Gene3D" id="1.10.10.60">
    <property type="entry name" value="Homeodomain-like"/>
    <property type="match status" value="1"/>
</dbReference>
<dbReference type="InterPro" id="IPR025281">
    <property type="entry name" value="DUF4074"/>
</dbReference>
<dbReference type="InterPro" id="IPR001356">
    <property type="entry name" value="HD"/>
</dbReference>
<dbReference type="InterPro" id="IPR020479">
    <property type="entry name" value="HD_metazoa"/>
</dbReference>
<dbReference type="InterPro" id="IPR001827">
    <property type="entry name" value="Homeobox_Antennapedia_CS"/>
</dbReference>
<dbReference type="InterPro" id="IPR017970">
    <property type="entry name" value="Homeobox_CS"/>
</dbReference>
<dbReference type="InterPro" id="IPR009057">
    <property type="entry name" value="Homeodomain-like_sf"/>
</dbReference>
<dbReference type="PANTHER" id="PTHR45664:SF5">
    <property type="entry name" value="HOMEOBOX PROTEIN HOX-D3"/>
    <property type="match status" value="1"/>
</dbReference>
<dbReference type="PANTHER" id="PTHR45664">
    <property type="entry name" value="PROTEIN ZERKNUELLT 1-RELATED"/>
    <property type="match status" value="1"/>
</dbReference>
<dbReference type="Pfam" id="PF13293">
    <property type="entry name" value="DUF4074"/>
    <property type="match status" value="1"/>
</dbReference>
<dbReference type="Pfam" id="PF00046">
    <property type="entry name" value="Homeodomain"/>
    <property type="match status" value="1"/>
</dbReference>
<dbReference type="PRINTS" id="PR00024">
    <property type="entry name" value="HOMEOBOX"/>
</dbReference>
<dbReference type="SMART" id="SM00389">
    <property type="entry name" value="HOX"/>
    <property type="match status" value="1"/>
</dbReference>
<dbReference type="SUPFAM" id="SSF46689">
    <property type="entry name" value="Homeodomain-like"/>
    <property type="match status" value="1"/>
</dbReference>
<dbReference type="PROSITE" id="PS00032">
    <property type="entry name" value="ANTENNAPEDIA"/>
    <property type="match status" value="1"/>
</dbReference>
<dbReference type="PROSITE" id="PS00027">
    <property type="entry name" value="HOMEOBOX_1"/>
    <property type="match status" value="1"/>
</dbReference>
<dbReference type="PROSITE" id="PS50071">
    <property type="entry name" value="HOMEOBOX_2"/>
    <property type="match status" value="1"/>
</dbReference>
<protein>
    <recommendedName>
        <fullName>Homeobox protein Hox-D3a</fullName>
    </recommendedName>
</protein>
<feature type="chain" id="PRO_0000265994" description="Homeobox protein Hox-D3a">
    <location>
        <begin position="1"/>
        <end position="408"/>
    </location>
</feature>
<feature type="DNA-binding region" description="Homeobox" evidence="2">
    <location>
        <begin position="175"/>
        <end position="234"/>
    </location>
</feature>
<feature type="region of interest" description="Disordered" evidence="3">
    <location>
        <begin position="1"/>
        <end position="27"/>
    </location>
</feature>
<feature type="region of interest" description="Disordered" evidence="3">
    <location>
        <begin position="44"/>
        <end position="120"/>
    </location>
</feature>
<feature type="region of interest" description="Disordered" evidence="3">
    <location>
        <begin position="132"/>
        <end position="179"/>
    </location>
</feature>
<feature type="region of interest" description="Disordered" evidence="3">
    <location>
        <begin position="233"/>
        <end position="278"/>
    </location>
</feature>
<feature type="region of interest" description="Disordered" evidence="3">
    <location>
        <begin position="376"/>
        <end position="408"/>
    </location>
</feature>
<feature type="short sequence motif" description="Antp-type hexapeptide">
    <location>
        <begin position="124"/>
        <end position="129"/>
    </location>
</feature>
<feature type="compositionally biased region" description="Polar residues" evidence="3">
    <location>
        <begin position="68"/>
        <end position="83"/>
    </location>
</feature>
<feature type="compositionally biased region" description="Low complexity" evidence="3">
    <location>
        <begin position="91"/>
        <end position="116"/>
    </location>
</feature>
<feature type="compositionally biased region" description="Polar residues" evidence="3">
    <location>
        <begin position="134"/>
        <end position="143"/>
    </location>
</feature>
<feature type="compositionally biased region" description="Polar residues" evidence="3">
    <location>
        <begin position="387"/>
        <end position="398"/>
    </location>
</feature>
<gene>
    <name type="primary">hoxd3a</name>
</gene>